<reference evidence="7" key="1">
    <citation type="journal article" date="2000" name="Science">
        <title>The genome sequence of Drosophila melanogaster.</title>
        <authorList>
            <person name="Adams M.D."/>
            <person name="Celniker S.E."/>
            <person name="Holt R.A."/>
            <person name="Evans C.A."/>
            <person name="Gocayne J.D."/>
            <person name="Amanatides P.G."/>
            <person name="Scherer S.E."/>
            <person name="Li P.W."/>
            <person name="Hoskins R.A."/>
            <person name="Galle R.F."/>
            <person name="George R.A."/>
            <person name="Lewis S.E."/>
            <person name="Richards S."/>
            <person name="Ashburner M."/>
            <person name="Henderson S.N."/>
            <person name="Sutton G.G."/>
            <person name="Wortman J.R."/>
            <person name="Yandell M.D."/>
            <person name="Zhang Q."/>
            <person name="Chen L.X."/>
            <person name="Brandon R.C."/>
            <person name="Rogers Y.-H.C."/>
            <person name="Blazej R.G."/>
            <person name="Champe M."/>
            <person name="Pfeiffer B.D."/>
            <person name="Wan K.H."/>
            <person name="Doyle C."/>
            <person name="Baxter E.G."/>
            <person name="Helt G."/>
            <person name="Nelson C.R."/>
            <person name="Miklos G.L.G."/>
            <person name="Abril J.F."/>
            <person name="Agbayani A."/>
            <person name="An H.-J."/>
            <person name="Andrews-Pfannkoch C."/>
            <person name="Baldwin D."/>
            <person name="Ballew R.M."/>
            <person name="Basu A."/>
            <person name="Baxendale J."/>
            <person name="Bayraktaroglu L."/>
            <person name="Beasley E.M."/>
            <person name="Beeson K.Y."/>
            <person name="Benos P.V."/>
            <person name="Berman B.P."/>
            <person name="Bhandari D."/>
            <person name="Bolshakov S."/>
            <person name="Borkova D."/>
            <person name="Botchan M.R."/>
            <person name="Bouck J."/>
            <person name="Brokstein P."/>
            <person name="Brottier P."/>
            <person name="Burtis K.C."/>
            <person name="Busam D.A."/>
            <person name="Butler H."/>
            <person name="Cadieu E."/>
            <person name="Center A."/>
            <person name="Chandra I."/>
            <person name="Cherry J.M."/>
            <person name="Cawley S."/>
            <person name="Dahlke C."/>
            <person name="Davenport L.B."/>
            <person name="Davies P."/>
            <person name="de Pablos B."/>
            <person name="Delcher A."/>
            <person name="Deng Z."/>
            <person name="Mays A.D."/>
            <person name="Dew I."/>
            <person name="Dietz S.M."/>
            <person name="Dodson K."/>
            <person name="Doup L.E."/>
            <person name="Downes M."/>
            <person name="Dugan-Rocha S."/>
            <person name="Dunkov B.C."/>
            <person name="Dunn P."/>
            <person name="Durbin K.J."/>
            <person name="Evangelista C.C."/>
            <person name="Ferraz C."/>
            <person name="Ferriera S."/>
            <person name="Fleischmann W."/>
            <person name="Fosler C."/>
            <person name="Gabrielian A.E."/>
            <person name="Garg N.S."/>
            <person name="Gelbart W.M."/>
            <person name="Glasser K."/>
            <person name="Glodek A."/>
            <person name="Gong F."/>
            <person name="Gorrell J.H."/>
            <person name="Gu Z."/>
            <person name="Guan P."/>
            <person name="Harris M."/>
            <person name="Harris N.L."/>
            <person name="Harvey D.A."/>
            <person name="Heiman T.J."/>
            <person name="Hernandez J.R."/>
            <person name="Houck J."/>
            <person name="Hostin D."/>
            <person name="Houston K.A."/>
            <person name="Howland T.J."/>
            <person name="Wei M.-H."/>
            <person name="Ibegwam C."/>
            <person name="Jalali M."/>
            <person name="Kalush F."/>
            <person name="Karpen G.H."/>
            <person name="Ke Z."/>
            <person name="Kennison J.A."/>
            <person name="Ketchum K.A."/>
            <person name="Kimmel B.E."/>
            <person name="Kodira C.D."/>
            <person name="Kraft C.L."/>
            <person name="Kravitz S."/>
            <person name="Kulp D."/>
            <person name="Lai Z."/>
            <person name="Lasko P."/>
            <person name="Lei Y."/>
            <person name="Levitsky A.A."/>
            <person name="Li J.H."/>
            <person name="Li Z."/>
            <person name="Liang Y."/>
            <person name="Lin X."/>
            <person name="Liu X."/>
            <person name="Mattei B."/>
            <person name="McIntosh T.C."/>
            <person name="McLeod M.P."/>
            <person name="McPherson D."/>
            <person name="Merkulov G."/>
            <person name="Milshina N.V."/>
            <person name="Mobarry C."/>
            <person name="Morris J."/>
            <person name="Moshrefi A."/>
            <person name="Mount S.M."/>
            <person name="Moy M."/>
            <person name="Murphy B."/>
            <person name="Murphy L."/>
            <person name="Muzny D.M."/>
            <person name="Nelson D.L."/>
            <person name="Nelson D.R."/>
            <person name="Nelson K.A."/>
            <person name="Nixon K."/>
            <person name="Nusskern D.R."/>
            <person name="Pacleb J.M."/>
            <person name="Palazzolo M."/>
            <person name="Pittman G.S."/>
            <person name="Pan S."/>
            <person name="Pollard J."/>
            <person name="Puri V."/>
            <person name="Reese M.G."/>
            <person name="Reinert K."/>
            <person name="Remington K."/>
            <person name="Saunders R.D.C."/>
            <person name="Scheeler F."/>
            <person name="Shen H."/>
            <person name="Shue B.C."/>
            <person name="Siden-Kiamos I."/>
            <person name="Simpson M."/>
            <person name="Skupski M.P."/>
            <person name="Smith T.J."/>
            <person name="Spier E."/>
            <person name="Spradling A.C."/>
            <person name="Stapleton M."/>
            <person name="Strong R."/>
            <person name="Sun E."/>
            <person name="Svirskas R."/>
            <person name="Tector C."/>
            <person name="Turner R."/>
            <person name="Venter E."/>
            <person name="Wang A.H."/>
            <person name="Wang X."/>
            <person name="Wang Z.-Y."/>
            <person name="Wassarman D.A."/>
            <person name="Weinstock G.M."/>
            <person name="Weissenbach J."/>
            <person name="Williams S.M."/>
            <person name="Woodage T."/>
            <person name="Worley K.C."/>
            <person name="Wu D."/>
            <person name="Yang S."/>
            <person name="Yao Q.A."/>
            <person name="Ye J."/>
            <person name="Yeh R.-F."/>
            <person name="Zaveri J.S."/>
            <person name="Zhan M."/>
            <person name="Zhang G."/>
            <person name="Zhao Q."/>
            <person name="Zheng L."/>
            <person name="Zheng X.H."/>
            <person name="Zhong F.N."/>
            <person name="Zhong W."/>
            <person name="Zhou X."/>
            <person name="Zhu S.C."/>
            <person name="Zhu X."/>
            <person name="Smith H.O."/>
            <person name="Gibbs R.A."/>
            <person name="Myers E.W."/>
            <person name="Rubin G.M."/>
            <person name="Venter J.C."/>
        </authorList>
    </citation>
    <scope>NUCLEOTIDE SEQUENCE [LARGE SCALE GENOMIC DNA]</scope>
    <source>
        <strain evidence="7">Berkeley</strain>
    </source>
</reference>
<reference evidence="7" key="2">
    <citation type="journal article" date="2002" name="Genome Biol.">
        <title>Annotation of the Drosophila melanogaster euchromatic genome: a systematic review.</title>
        <authorList>
            <person name="Misra S."/>
            <person name="Crosby M.A."/>
            <person name="Mungall C.J."/>
            <person name="Matthews B.B."/>
            <person name="Campbell K.S."/>
            <person name="Hradecky P."/>
            <person name="Huang Y."/>
            <person name="Kaminker J.S."/>
            <person name="Millburn G.H."/>
            <person name="Prochnik S.E."/>
            <person name="Smith C.D."/>
            <person name="Tupy J.L."/>
            <person name="Whitfield E.J."/>
            <person name="Bayraktaroglu L."/>
            <person name="Berman B.P."/>
            <person name="Bettencourt B.R."/>
            <person name="Celniker S.E."/>
            <person name="de Grey A.D.N.J."/>
            <person name="Drysdale R.A."/>
            <person name="Harris N.L."/>
            <person name="Richter J."/>
            <person name="Russo S."/>
            <person name="Schroeder A.J."/>
            <person name="Shu S.Q."/>
            <person name="Stapleton M."/>
            <person name="Yamada C."/>
            <person name="Ashburner M."/>
            <person name="Gelbart W.M."/>
            <person name="Rubin G.M."/>
            <person name="Lewis S.E."/>
        </authorList>
    </citation>
    <scope>GENOME REANNOTATION</scope>
    <source>
        <strain evidence="7">Berkeley</strain>
    </source>
</reference>
<reference evidence="5" key="3">
    <citation type="submission" date="2006-01" db="EMBL/GenBank/DDBJ databases">
        <authorList>
            <person name="Stapleton M."/>
            <person name="Carlson J."/>
            <person name="Chavez C."/>
            <person name="Frise E."/>
            <person name="George R."/>
            <person name="Pacleb J."/>
            <person name="Park S."/>
            <person name="Wan K."/>
            <person name="Yu C."/>
            <person name="Celniker S."/>
        </authorList>
    </citation>
    <scope>NUCLEOTIDE SEQUENCE [LARGE SCALE MRNA]</scope>
</reference>
<reference evidence="3" key="4">
    <citation type="journal article" date="2014" name="Genetics">
        <title>A novel cell death gene acts to repair patterning defects in Drosophila melanogaster.</title>
        <authorList>
            <person name="Tanaka K.M."/>
            <person name="Takahashi A."/>
            <person name="Fuse N."/>
            <person name="Takano-Shimizu-Kouno T."/>
        </authorList>
    </citation>
    <scope>FUNCTION</scope>
    <scope>DEVELOPMENTAL STAGE</scope>
    <scope>DISRUPTION PHENOTYPE</scope>
</reference>
<sequence>MEHHQIYRHKKFDMGRKIEKCDLQLKEELISRSGTPCTSRSPFDAANQSVSLGFSDQDADFPPLPKRRRLGSSSSSVSYQSASPIITEAIQDIFKYHVNMVRKFPKKERSPKDQERRNKNTIACRMSRRKKKFDDLQIEQQYKECSDEHLKIAEQSLRARVYLNHLKQLVKQEDHPLVSSRRVPEENTKSNFSIDYLIGGIKQEHA</sequence>
<feature type="chain" id="PRO_0000436600" description="Protein Mabiki">
    <location>
        <begin position="1"/>
        <end position="206"/>
    </location>
</feature>
<feature type="region of interest" description="Disordered" evidence="1">
    <location>
        <begin position="54"/>
        <end position="77"/>
    </location>
</feature>
<comment type="function">
    <text evidence="2">Plays a role in inducing apoptosis and is involved in the repair of head patterning defects in the embryo caused by extra maternal copies of the homeotic gene bicoid.</text>
</comment>
<comment type="developmental stage">
    <text evidence="2">Expressed throughout the embryo at stage 11 with a higher level in the anterior region. At stage 12, a few cells show expression.</text>
</comment>
<comment type="disruption phenotype">
    <text evidence="2">Embryonic lethality with increased frequency of embryonic head defects and reduced embryonic cell death.</text>
</comment>
<gene>
    <name evidence="6" type="primary">Mabi</name>
    <name evidence="6" type="ORF">CG15479</name>
</gene>
<accession>Q9VK13</accession>
<keyword id="KW-0053">Apoptosis</keyword>
<keyword id="KW-1185">Reference proteome</keyword>
<name>MABI_DROME</name>
<organism evidence="7">
    <name type="scientific">Drosophila melanogaster</name>
    <name type="common">Fruit fly</name>
    <dbReference type="NCBI Taxonomy" id="7227"/>
    <lineage>
        <taxon>Eukaryota</taxon>
        <taxon>Metazoa</taxon>
        <taxon>Ecdysozoa</taxon>
        <taxon>Arthropoda</taxon>
        <taxon>Hexapoda</taxon>
        <taxon>Insecta</taxon>
        <taxon>Pterygota</taxon>
        <taxon>Neoptera</taxon>
        <taxon>Endopterygota</taxon>
        <taxon>Diptera</taxon>
        <taxon>Brachycera</taxon>
        <taxon>Muscomorpha</taxon>
        <taxon>Ephydroidea</taxon>
        <taxon>Drosophilidae</taxon>
        <taxon>Drosophila</taxon>
        <taxon>Sophophora</taxon>
    </lineage>
</organism>
<protein>
    <recommendedName>
        <fullName evidence="4">Protein Mabiki</fullName>
    </recommendedName>
</protein>
<evidence type="ECO:0000256" key="1">
    <source>
        <dbReference type="SAM" id="MobiDB-lite"/>
    </source>
</evidence>
<evidence type="ECO:0000269" key="2">
    <source>
    </source>
</evidence>
<evidence type="ECO:0000305" key="3"/>
<evidence type="ECO:0000312" key="4">
    <source>
        <dbReference type="EMBL" id="AAF53269.1"/>
    </source>
</evidence>
<evidence type="ECO:0000312" key="5">
    <source>
        <dbReference type="EMBL" id="ABC86434.1"/>
    </source>
</evidence>
<evidence type="ECO:0000312" key="6">
    <source>
        <dbReference type="FlyBase" id="FBgn0032493"/>
    </source>
</evidence>
<evidence type="ECO:0000312" key="7">
    <source>
        <dbReference type="Proteomes" id="UP000000803"/>
    </source>
</evidence>
<dbReference type="EMBL" id="AE014134">
    <property type="protein sequence ID" value="AAF53269.1"/>
    <property type="molecule type" value="Genomic_DNA"/>
</dbReference>
<dbReference type="EMBL" id="BT024372">
    <property type="protein sequence ID" value="ABC86434.1"/>
    <property type="molecule type" value="mRNA"/>
</dbReference>
<dbReference type="RefSeq" id="NP_609624.1">
    <property type="nucleotide sequence ID" value="NM_135780.3"/>
</dbReference>
<dbReference type="SMR" id="Q9VK13"/>
<dbReference type="IntAct" id="Q9VK13">
    <property type="interactions" value="5"/>
</dbReference>
<dbReference type="STRING" id="7227.FBpp0080060"/>
<dbReference type="PaxDb" id="7227-FBpp0080060"/>
<dbReference type="DNASU" id="34727"/>
<dbReference type="EnsemblMetazoa" id="FBtr0080481">
    <property type="protein sequence ID" value="FBpp0080060"/>
    <property type="gene ID" value="FBgn0032493"/>
</dbReference>
<dbReference type="GeneID" id="34727"/>
<dbReference type="KEGG" id="dme:Dmel_CG15479"/>
<dbReference type="UCSC" id="CG15479-RA">
    <property type="organism name" value="d. melanogaster"/>
</dbReference>
<dbReference type="AGR" id="FB:FBgn0032493"/>
<dbReference type="CTD" id="34727"/>
<dbReference type="FlyBase" id="FBgn0032493">
    <property type="gene designation" value="Mabi"/>
</dbReference>
<dbReference type="VEuPathDB" id="VectorBase:FBgn0032493"/>
<dbReference type="eggNOG" id="ENOG502T801">
    <property type="taxonomic scope" value="Eukaryota"/>
</dbReference>
<dbReference type="HOGENOM" id="CLU_1333192_0_0_1"/>
<dbReference type="InParanoid" id="Q9VK13"/>
<dbReference type="OMA" id="KYHVNMV"/>
<dbReference type="OrthoDB" id="8052785at2759"/>
<dbReference type="PhylomeDB" id="Q9VK13"/>
<dbReference type="Reactome" id="R-DME-2559582">
    <property type="pathway name" value="Senescence-Associated Secretory Phenotype (SASP)"/>
</dbReference>
<dbReference type="Reactome" id="R-DME-9616222">
    <property type="pathway name" value="Transcriptional regulation of granulopoiesis"/>
</dbReference>
<dbReference type="SignaLink" id="Q9VK13"/>
<dbReference type="BioGRID-ORCS" id="34727">
    <property type="hits" value="0 hits in 1 CRISPR screen"/>
</dbReference>
<dbReference type="GenomeRNAi" id="34727"/>
<dbReference type="PRO" id="PR:Q9VK13"/>
<dbReference type="Proteomes" id="UP000000803">
    <property type="component" value="Chromosome 2L"/>
</dbReference>
<dbReference type="Bgee" id="FBgn0032493">
    <property type="expression patterns" value="Expressed in male accessory gland main cell (Drosophila) in male reproductive gland and 5 other cell types or tissues"/>
</dbReference>
<dbReference type="GO" id="GO:0000981">
    <property type="term" value="F:DNA-binding transcription factor activity, RNA polymerase II-specific"/>
    <property type="evidence" value="ECO:0000318"/>
    <property type="project" value="GO_Central"/>
</dbReference>
<dbReference type="GO" id="GO:0000978">
    <property type="term" value="F:RNA polymerase II cis-regulatory region sequence-specific DNA binding"/>
    <property type="evidence" value="ECO:0000318"/>
    <property type="project" value="GO_Central"/>
</dbReference>
<dbReference type="GO" id="GO:0006915">
    <property type="term" value="P:apoptotic process"/>
    <property type="evidence" value="ECO:0007669"/>
    <property type="project" value="UniProtKB-KW"/>
</dbReference>
<dbReference type="GO" id="GO:0043065">
    <property type="term" value="P:positive regulation of apoptotic process"/>
    <property type="evidence" value="ECO:0000315"/>
    <property type="project" value="FlyBase"/>
</dbReference>
<dbReference type="GO" id="GO:0006357">
    <property type="term" value="P:regulation of transcription by RNA polymerase II"/>
    <property type="evidence" value="ECO:0000318"/>
    <property type="project" value="GO_Central"/>
</dbReference>
<dbReference type="Gene3D" id="1.20.5.170">
    <property type="match status" value="1"/>
</dbReference>
<dbReference type="InterPro" id="IPR046347">
    <property type="entry name" value="bZIP_sf"/>
</dbReference>
<dbReference type="SUPFAM" id="SSF57959">
    <property type="entry name" value="Leucine zipper domain"/>
    <property type="match status" value="1"/>
</dbReference>
<proteinExistence type="evidence at transcript level"/>